<protein>
    <recommendedName>
        <fullName evidence="1">Aspartate carbamoyltransferase catalytic subunit</fullName>
        <ecNumber evidence="1">2.1.3.2</ecNumber>
    </recommendedName>
    <alternativeName>
        <fullName evidence="1">Aspartate transcarbamylase</fullName>
        <shortName evidence="1">ATCase</shortName>
    </alternativeName>
</protein>
<organism>
    <name type="scientific">Coxiella burnetii (strain CbuG_Q212)</name>
    <name type="common">Coxiella burnetii (strain Q212)</name>
    <dbReference type="NCBI Taxonomy" id="434923"/>
    <lineage>
        <taxon>Bacteria</taxon>
        <taxon>Pseudomonadati</taxon>
        <taxon>Pseudomonadota</taxon>
        <taxon>Gammaproteobacteria</taxon>
        <taxon>Legionellales</taxon>
        <taxon>Coxiellaceae</taxon>
        <taxon>Coxiella</taxon>
    </lineage>
</organism>
<reference key="1">
    <citation type="journal article" date="2009" name="Infect. Immun.">
        <title>Comparative genomics reveal extensive transposon-mediated genomic plasticity and diversity among potential effector proteins within the genus Coxiella.</title>
        <authorList>
            <person name="Beare P.A."/>
            <person name="Unsworth N."/>
            <person name="Andoh M."/>
            <person name="Voth D.E."/>
            <person name="Omsland A."/>
            <person name="Gilk S.D."/>
            <person name="Williams K.P."/>
            <person name="Sobral B.W."/>
            <person name="Kupko J.J. III"/>
            <person name="Porcella S.F."/>
            <person name="Samuel J.E."/>
            <person name="Heinzen R.A."/>
        </authorList>
    </citation>
    <scope>NUCLEOTIDE SEQUENCE [LARGE SCALE GENOMIC DNA]</scope>
    <source>
        <strain>CbuG_Q212</strain>
    </source>
</reference>
<accession>B6J3V8</accession>
<sequence>MNELPLHLLNMRSLTRDHIEKLIQRANYFLTQGMEKNSVFETLKGHVVANLFFEPSTRTRNSFEIAAKRLGAMVLNPNLKISAISKGETLFDTIKTLEAMGVYFFIVRHSENETPEQIAKQLSSGVVINAGDGNHQHPSQALIDLMTIKQHKPHWNKLCVTIIGDIRHSRVANSLMDGLVTMGVPEIRLVGPSSLLPDKVGNDSIKKFTELKPSLLNSDVIVTLRLQKERHDNSVDIDAFRGSFRLTPEKLYSAKPDAIVMHPGPVNREVEINSDVADNQQSVILQQVRNGVAMRMAVLELFLLRDFRFF</sequence>
<evidence type="ECO:0000255" key="1">
    <source>
        <dbReference type="HAMAP-Rule" id="MF_00001"/>
    </source>
</evidence>
<comment type="function">
    <text evidence="1">Catalyzes the condensation of carbamoyl phosphate and aspartate to form carbamoyl aspartate and inorganic phosphate, the committed step in the de novo pyrimidine nucleotide biosynthesis pathway.</text>
</comment>
<comment type="catalytic activity">
    <reaction evidence="1">
        <text>carbamoyl phosphate + L-aspartate = N-carbamoyl-L-aspartate + phosphate + H(+)</text>
        <dbReference type="Rhea" id="RHEA:20013"/>
        <dbReference type="ChEBI" id="CHEBI:15378"/>
        <dbReference type="ChEBI" id="CHEBI:29991"/>
        <dbReference type="ChEBI" id="CHEBI:32814"/>
        <dbReference type="ChEBI" id="CHEBI:43474"/>
        <dbReference type="ChEBI" id="CHEBI:58228"/>
        <dbReference type="EC" id="2.1.3.2"/>
    </reaction>
</comment>
<comment type="pathway">
    <text evidence="1">Pyrimidine metabolism; UMP biosynthesis via de novo pathway; (S)-dihydroorotate from bicarbonate: step 2/3.</text>
</comment>
<comment type="subunit">
    <text evidence="1">Heterododecamer (2C3:3R2) of six catalytic PyrB chains organized as two trimers (C3), and six regulatory PyrI chains organized as three dimers (R2).</text>
</comment>
<comment type="similarity">
    <text evidence="1">Belongs to the aspartate/ornithine carbamoyltransferase superfamily. ATCase family.</text>
</comment>
<keyword id="KW-0665">Pyrimidine biosynthesis</keyword>
<keyword id="KW-0808">Transferase</keyword>
<name>PYRB_COXB2</name>
<feature type="chain" id="PRO_1000088756" description="Aspartate carbamoyltransferase catalytic subunit">
    <location>
        <begin position="1"/>
        <end position="310"/>
    </location>
</feature>
<feature type="binding site" evidence="1">
    <location>
        <position position="58"/>
    </location>
    <ligand>
        <name>carbamoyl phosphate</name>
        <dbReference type="ChEBI" id="CHEBI:58228"/>
    </ligand>
</feature>
<feature type="binding site" evidence="1">
    <location>
        <position position="59"/>
    </location>
    <ligand>
        <name>carbamoyl phosphate</name>
        <dbReference type="ChEBI" id="CHEBI:58228"/>
    </ligand>
</feature>
<feature type="binding site" evidence="1">
    <location>
        <position position="86"/>
    </location>
    <ligand>
        <name>L-aspartate</name>
        <dbReference type="ChEBI" id="CHEBI:29991"/>
    </ligand>
</feature>
<feature type="binding site" evidence="1">
    <location>
        <position position="108"/>
    </location>
    <ligand>
        <name>carbamoyl phosphate</name>
        <dbReference type="ChEBI" id="CHEBI:58228"/>
    </ligand>
</feature>
<feature type="binding site" evidence="1">
    <location>
        <position position="137"/>
    </location>
    <ligand>
        <name>carbamoyl phosphate</name>
        <dbReference type="ChEBI" id="CHEBI:58228"/>
    </ligand>
</feature>
<feature type="binding site" evidence="1">
    <location>
        <position position="140"/>
    </location>
    <ligand>
        <name>carbamoyl phosphate</name>
        <dbReference type="ChEBI" id="CHEBI:58228"/>
    </ligand>
</feature>
<feature type="binding site" evidence="1">
    <location>
        <position position="170"/>
    </location>
    <ligand>
        <name>L-aspartate</name>
        <dbReference type="ChEBI" id="CHEBI:29991"/>
    </ligand>
</feature>
<feature type="binding site" evidence="1">
    <location>
        <position position="225"/>
    </location>
    <ligand>
        <name>L-aspartate</name>
        <dbReference type="ChEBI" id="CHEBI:29991"/>
    </ligand>
</feature>
<feature type="binding site" evidence="1">
    <location>
        <position position="264"/>
    </location>
    <ligand>
        <name>carbamoyl phosphate</name>
        <dbReference type="ChEBI" id="CHEBI:58228"/>
    </ligand>
</feature>
<feature type="binding site" evidence="1">
    <location>
        <position position="265"/>
    </location>
    <ligand>
        <name>carbamoyl phosphate</name>
        <dbReference type="ChEBI" id="CHEBI:58228"/>
    </ligand>
</feature>
<proteinExistence type="inferred from homology"/>
<gene>
    <name evidence="1" type="primary">pyrB</name>
    <name type="ordered locus">CbuG_2097</name>
</gene>
<dbReference type="EC" id="2.1.3.2" evidence="1"/>
<dbReference type="EMBL" id="CP001019">
    <property type="protein sequence ID" value="ACJ19330.1"/>
    <property type="molecule type" value="Genomic_DNA"/>
</dbReference>
<dbReference type="RefSeq" id="WP_010958650.1">
    <property type="nucleotide sequence ID" value="NC_011527.1"/>
</dbReference>
<dbReference type="SMR" id="B6J3V8"/>
<dbReference type="KEGG" id="cbg:CbuG_2097"/>
<dbReference type="HOGENOM" id="CLU_043846_2_0_6"/>
<dbReference type="UniPathway" id="UPA00070">
    <property type="reaction ID" value="UER00116"/>
</dbReference>
<dbReference type="GO" id="GO:0005829">
    <property type="term" value="C:cytosol"/>
    <property type="evidence" value="ECO:0007669"/>
    <property type="project" value="TreeGrafter"/>
</dbReference>
<dbReference type="GO" id="GO:0016597">
    <property type="term" value="F:amino acid binding"/>
    <property type="evidence" value="ECO:0007669"/>
    <property type="project" value="InterPro"/>
</dbReference>
<dbReference type="GO" id="GO:0004070">
    <property type="term" value="F:aspartate carbamoyltransferase activity"/>
    <property type="evidence" value="ECO:0007669"/>
    <property type="project" value="UniProtKB-UniRule"/>
</dbReference>
<dbReference type="GO" id="GO:0006207">
    <property type="term" value="P:'de novo' pyrimidine nucleobase biosynthetic process"/>
    <property type="evidence" value="ECO:0007669"/>
    <property type="project" value="InterPro"/>
</dbReference>
<dbReference type="GO" id="GO:0044205">
    <property type="term" value="P:'de novo' UMP biosynthetic process"/>
    <property type="evidence" value="ECO:0007669"/>
    <property type="project" value="UniProtKB-UniRule"/>
</dbReference>
<dbReference type="GO" id="GO:0006520">
    <property type="term" value="P:amino acid metabolic process"/>
    <property type="evidence" value="ECO:0007669"/>
    <property type="project" value="InterPro"/>
</dbReference>
<dbReference type="Gene3D" id="3.40.50.1370">
    <property type="entry name" value="Aspartate/ornithine carbamoyltransferase"/>
    <property type="match status" value="2"/>
</dbReference>
<dbReference type="HAMAP" id="MF_00001">
    <property type="entry name" value="Asp_carb_tr"/>
    <property type="match status" value="1"/>
</dbReference>
<dbReference type="InterPro" id="IPR006132">
    <property type="entry name" value="Asp/Orn_carbamoyltranf_P-bd"/>
</dbReference>
<dbReference type="InterPro" id="IPR006130">
    <property type="entry name" value="Asp/Orn_carbamoylTrfase"/>
</dbReference>
<dbReference type="InterPro" id="IPR036901">
    <property type="entry name" value="Asp/Orn_carbamoylTrfase_sf"/>
</dbReference>
<dbReference type="InterPro" id="IPR002082">
    <property type="entry name" value="Asp_carbamoyltransf"/>
</dbReference>
<dbReference type="InterPro" id="IPR006131">
    <property type="entry name" value="Asp_carbamoyltransf_Asp/Orn-bd"/>
</dbReference>
<dbReference type="NCBIfam" id="TIGR00670">
    <property type="entry name" value="asp_carb_tr"/>
    <property type="match status" value="1"/>
</dbReference>
<dbReference type="NCBIfam" id="NF002032">
    <property type="entry name" value="PRK00856.1"/>
    <property type="match status" value="1"/>
</dbReference>
<dbReference type="NCBIfam" id="NF010387">
    <property type="entry name" value="PRK13814.1"/>
    <property type="match status" value="1"/>
</dbReference>
<dbReference type="PANTHER" id="PTHR45753:SF6">
    <property type="entry name" value="ASPARTATE CARBAMOYLTRANSFERASE"/>
    <property type="match status" value="1"/>
</dbReference>
<dbReference type="PANTHER" id="PTHR45753">
    <property type="entry name" value="ORNITHINE CARBAMOYLTRANSFERASE, MITOCHONDRIAL"/>
    <property type="match status" value="1"/>
</dbReference>
<dbReference type="Pfam" id="PF00185">
    <property type="entry name" value="OTCace"/>
    <property type="match status" value="1"/>
</dbReference>
<dbReference type="Pfam" id="PF02729">
    <property type="entry name" value="OTCace_N"/>
    <property type="match status" value="1"/>
</dbReference>
<dbReference type="PRINTS" id="PR00100">
    <property type="entry name" value="AOTCASE"/>
</dbReference>
<dbReference type="PRINTS" id="PR00101">
    <property type="entry name" value="ATCASE"/>
</dbReference>
<dbReference type="SUPFAM" id="SSF53671">
    <property type="entry name" value="Aspartate/ornithine carbamoyltransferase"/>
    <property type="match status" value="1"/>
</dbReference>
<dbReference type="PROSITE" id="PS00097">
    <property type="entry name" value="CARBAMOYLTRANSFERASE"/>
    <property type="match status" value="1"/>
</dbReference>